<comment type="function">
    <text evidence="1 5 6 8 9 10 11 13 16">Glutathione S-transferase; part of the gene cluster that mediates the biosynthesis of sterigmatocystin (ST), a polyketide-derived furanocoumarin which is part of the most toxic and carcinogenic compounds among the known mycotoxins (PubMed:8643646). The first step in the biosynthesis of sterigmatocystin is the production of hexanoate by the fatty acid synthase (FAS) units stcJ and stcK (PubMed:8962148). The polyketide backbone is assembled by the non-reducing polyketide synthase stcA by condensation of the starter hexanoyl-CoA and 7 malonyl-CoA extender units followed by cyclization and release of norsolorinic acid (By similarity). Norsolorinic acid is the first stable intermediate in the biosynthesis of sterigmatocystin and is converted into averantin (AVN) by the ketoreductase stcE which reduces the hexanoate ketone to an alcohol (Probable) (PubMed:8643646). Averantin is then oxidized into 5'-hydroxyaverantin (HAVN) by the cytochrome P450 monooxygenase stcF (PubMed:10618248). 5'-hydroxyaverantin is further converted to 5'-oxyaverantin (OAVN) by the 5'-hydroxyaverantin dehydrogenase stcG (PubMed:24957370). The next step is the conversion of OAVN into averufin (AVF) which is catalyzed by a yet to be identified enzyme (PubMed:24957370). The cytochrome P450 monooxygenase stcB and the flavin-binding monooxygenase stcW are both required for the conversion of averufin to 1-hydroxyversicolorone (PubMed:10618248). The esterase stcI probably catalyzes the formation of versiconal hemiacetal acetate from 1-hydroxyversicolorone (PubMed:24957370). The oxydoreductase stcN then probably catalyzes the biosynthetic step from versiconal to versicolorin B (VERB) (PubMed:24957370). The next step is performed by the versicolorin B desaturase stcL to produce versicolorin A (VERA) (PubMed:8999832). The ketoreductase stcU and the cytochrome P450 monooxygenase stcS are involved in the conversion of versicolorin A to demethylsterigmatocystin (PubMed:7486998). The Baeyer-Villiger oxidas stcQ and the reductase stcR might be involved in the biosynthetic step from versicolorin A to demethylsterigmatocystin (PubMed:24957370). The final step in the biosynthesis of sterigmatocystin is the methylation of demethylsterigmatocystin catalyzed by the methyltransferase stcP (PubMed:8900026).</text>
</comment>
<comment type="cofactor">
    <cofactor evidence="2">
        <name>glutathione</name>
        <dbReference type="ChEBI" id="CHEBI:57925"/>
    </cofactor>
</comment>
<comment type="pathway">
    <text evidence="8">Mycotoxin biosynthesis; sterigmatocystin biosynthesis.</text>
</comment>
<comment type="induction">
    <text evidence="7 8 12">The genes forming the sterigmatocystin biosynthesis cluster are co-regulated and induced on oatmeal porridge or the fungal isolates were grown either on oatmeal porridge or in YEC medium (0.2% yeast extract, 5.0% corn steep liquor) (PubMed:8017929, PubMed:8643646). Expression is positively regulated by the cluster-specific transcription factor aflR that binds the palindromic sequence 5'-TCG(N5)CGA-3'found in the promoter (PubMed:9680223).</text>
</comment>
<comment type="similarity">
    <text evidence="15">Belongs to the GST superfamily.</text>
</comment>
<proteinExistence type="evidence at transcript level"/>
<organism>
    <name type="scientific">Emericella nidulans (strain FGSC A4 / ATCC 38163 / CBS 112.46 / NRRL 194 / M139)</name>
    <name type="common">Aspergillus nidulans</name>
    <dbReference type="NCBI Taxonomy" id="227321"/>
    <lineage>
        <taxon>Eukaryota</taxon>
        <taxon>Fungi</taxon>
        <taxon>Dikarya</taxon>
        <taxon>Ascomycota</taxon>
        <taxon>Pezizomycotina</taxon>
        <taxon>Eurotiomycetes</taxon>
        <taxon>Eurotiomycetidae</taxon>
        <taxon>Eurotiales</taxon>
        <taxon>Aspergillaceae</taxon>
        <taxon>Aspergillus</taxon>
        <taxon>Aspergillus subgen. Nidulantes</taxon>
    </lineage>
</organism>
<accession>Q00717</accession>
<accession>C8VDS9</accession>
<accession>Q00797</accession>
<accession>Q5AV73</accession>
<sequence length="215" mass="24059">MPFGTLYTRPFNPRSLAILAIAKANNLPLKIKTITSFKDATEEYLQLNPLGKIPTFVGADGYVLTESIAIALYDSNTTLLGTTGQEYASIIRWMAFGITEILPALGGWFNPLIGRANFNADNIYQSKDDTLARLKILDNHLCGREYLVGETLSLADLFVLGIVQGAFRFFLDKRWRDEHRNLSTWFERVHALPIVVDVAGPPVLAEYEMPIQPPK</sequence>
<protein>
    <recommendedName>
        <fullName evidence="14">Glutathione S-transferase stcT</fullName>
        <ecNumber evidence="2">2.5.1.-</ecNumber>
    </recommendedName>
    <alternativeName>
        <fullName evidence="14">Sterigmatocystin biosynthesis cluster protein T</fullName>
    </alternativeName>
</protein>
<gene>
    <name evidence="14" type="primary">stcT</name>
    <name type="ORF">AN7807</name>
</gene>
<evidence type="ECO:0000250" key="1">
    <source>
        <dbReference type="UniProtKB" id="Q12053"/>
    </source>
</evidence>
<evidence type="ECO:0000250" key="2">
    <source>
        <dbReference type="UniProtKB" id="Q4WB03"/>
    </source>
</evidence>
<evidence type="ECO:0000255" key="3">
    <source>
        <dbReference type="PROSITE-ProRule" id="PRU00684"/>
    </source>
</evidence>
<evidence type="ECO:0000255" key="4">
    <source>
        <dbReference type="PROSITE-ProRule" id="PRU00685"/>
    </source>
</evidence>
<evidence type="ECO:0000269" key="5">
    <source>
    </source>
</evidence>
<evidence type="ECO:0000269" key="6">
    <source>
    </source>
</evidence>
<evidence type="ECO:0000269" key="7">
    <source>
    </source>
</evidence>
<evidence type="ECO:0000269" key="8">
    <source>
    </source>
</evidence>
<evidence type="ECO:0000269" key="9">
    <source>
    </source>
</evidence>
<evidence type="ECO:0000269" key="10">
    <source>
    </source>
</evidence>
<evidence type="ECO:0000269" key="11">
    <source>
    </source>
</evidence>
<evidence type="ECO:0000269" key="12">
    <source>
    </source>
</evidence>
<evidence type="ECO:0000303" key="13">
    <source>
    </source>
</evidence>
<evidence type="ECO:0000303" key="14">
    <source>
    </source>
</evidence>
<evidence type="ECO:0000305" key="15"/>
<evidence type="ECO:0000305" key="16">
    <source>
    </source>
</evidence>
<reference key="1">
    <citation type="journal article" date="1996" name="Proc. Natl. Acad. Sci. U.S.A.">
        <title>Twenty-five coregulated transcripts define a sterigmatocystin gene cluster in Aspergillus nidulans.</title>
        <authorList>
            <person name="Brown D.W."/>
            <person name="Yu J.-H."/>
            <person name="Kelkar H.S."/>
            <person name="Fernandes M."/>
            <person name="Nesbitt T.C."/>
            <person name="Keller N.P."/>
            <person name="Adams T.H."/>
            <person name="Leonard T.J."/>
        </authorList>
    </citation>
    <scope>NUCLEOTIDE SEQUENCE [GENOMIC DNA]</scope>
    <scope>INDUCTION</scope>
    <scope>FUNCTION</scope>
    <scope>PATHWAY</scope>
    <source>
        <strain>FGSC 26</strain>
    </source>
</reference>
<reference key="2">
    <citation type="journal article" date="1994" name="Appl. Environ. Microbiol.">
        <title>Aspergillus nidulans verA is required for production of the mycotoxin sterigmatocystin.</title>
        <authorList>
            <person name="Keller N.P."/>
            <person name="Kantz N.J."/>
            <person name="Adams T.H."/>
        </authorList>
    </citation>
    <scope>NUCLEOTIDE SEQUENCE [GENOMIC DNA]</scope>
    <scope>FUNCTION</scope>
    <scope>INDUCTION</scope>
    <source>
        <strain>FGSC 26</strain>
    </source>
</reference>
<reference key="3">
    <citation type="journal article" date="2005" name="Nature">
        <title>Sequencing of Aspergillus nidulans and comparative analysis with A. fumigatus and A. oryzae.</title>
        <authorList>
            <person name="Galagan J.E."/>
            <person name="Calvo S.E."/>
            <person name="Cuomo C."/>
            <person name="Ma L.-J."/>
            <person name="Wortman J.R."/>
            <person name="Batzoglou S."/>
            <person name="Lee S.-I."/>
            <person name="Bastuerkmen M."/>
            <person name="Spevak C.C."/>
            <person name="Clutterbuck J."/>
            <person name="Kapitonov V."/>
            <person name="Jurka J."/>
            <person name="Scazzocchio C."/>
            <person name="Farman M.L."/>
            <person name="Butler J."/>
            <person name="Purcell S."/>
            <person name="Harris S."/>
            <person name="Braus G.H."/>
            <person name="Draht O."/>
            <person name="Busch S."/>
            <person name="D'Enfert C."/>
            <person name="Bouchier C."/>
            <person name="Goldman G.H."/>
            <person name="Bell-Pedersen D."/>
            <person name="Griffiths-Jones S."/>
            <person name="Doonan J.H."/>
            <person name="Yu J."/>
            <person name="Vienken K."/>
            <person name="Pain A."/>
            <person name="Freitag M."/>
            <person name="Selker E.U."/>
            <person name="Archer D.B."/>
            <person name="Penalva M.A."/>
            <person name="Oakley B.R."/>
            <person name="Momany M."/>
            <person name="Tanaka T."/>
            <person name="Kumagai T."/>
            <person name="Asai K."/>
            <person name="Machida M."/>
            <person name="Nierman W.C."/>
            <person name="Denning D.W."/>
            <person name="Caddick M.X."/>
            <person name="Hynes M."/>
            <person name="Paoletti M."/>
            <person name="Fischer R."/>
            <person name="Miller B.L."/>
            <person name="Dyer P.S."/>
            <person name="Sachs M.S."/>
            <person name="Osmani S.A."/>
            <person name="Birren B.W."/>
        </authorList>
    </citation>
    <scope>NUCLEOTIDE SEQUENCE [LARGE SCALE GENOMIC DNA]</scope>
    <source>
        <strain>FGSC A4 / ATCC 38163 / CBS 112.46 / NRRL 194 / M139</strain>
    </source>
</reference>
<reference key="4">
    <citation type="journal article" date="2009" name="Fungal Genet. Biol.">
        <title>The 2008 update of the Aspergillus nidulans genome annotation: a community effort.</title>
        <authorList>
            <person name="Wortman J.R."/>
            <person name="Gilsenan J.M."/>
            <person name="Joardar V."/>
            <person name="Deegan J."/>
            <person name="Clutterbuck J."/>
            <person name="Andersen M.R."/>
            <person name="Archer D."/>
            <person name="Bencina M."/>
            <person name="Braus G."/>
            <person name="Coutinho P."/>
            <person name="von Dohren H."/>
            <person name="Doonan J."/>
            <person name="Driessen A.J."/>
            <person name="Durek P."/>
            <person name="Espeso E."/>
            <person name="Fekete E."/>
            <person name="Flipphi M."/>
            <person name="Estrada C.G."/>
            <person name="Geysens S."/>
            <person name="Goldman G."/>
            <person name="de Groot P.W."/>
            <person name="Hansen K."/>
            <person name="Harris S.D."/>
            <person name="Heinekamp T."/>
            <person name="Helmstaedt K."/>
            <person name="Henrissat B."/>
            <person name="Hofmann G."/>
            <person name="Homan T."/>
            <person name="Horio T."/>
            <person name="Horiuchi H."/>
            <person name="James S."/>
            <person name="Jones M."/>
            <person name="Karaffa L."/>
            <person name="Karanyi Z."/>
            <person name="Kato M."/>
            <person name="Keller N."/>
            <person name="Kelly D.E."/>
            <person name="Kiel J.A."/>
            <person name="Kim J.M."/>
            <person name="van der Klei I.J."/>
            <person name="Klis F.M."/>
            <person name="Kovalchuk A."/>
            <person name="Krasevec N."/>
            <person name="Kubicek C.P."/>
            <person name="Liu B."/>
            <person name="Maccabe A."/>
            <person name="Meyer V."/>
            <person name="Mirabito P."/>
            <person name="Miskei M."/>
            <person name="Mos M."/>
            <person name="Mullins J."/>
            <person name="Nelson D.R."/>
            <person name="Nielsen J."/>
            <person name="Oakley B.R."/>
            <person name="Osmani S.A."/>
            <person name="Pakula T."/>
            <person name="Paszewski A."/>
            <person name="Paulsen I."/>
            <person name="Pilsyk S."/>
            <person name="Pocsi I."/>
            <person name="Punt P.J."/>
            <person name="Ram A.F."/>
            <person name="Ren Q."/>
            <person name="Robellet X."/>
            <person name="Robson G."/>
            <person name="Seiboth B."/>
            <person name="van Solingen P."/>
            <person name="Specht T."/>
            <person name="Sun J."/>
            <person name="Taheri-Talesh N."/>
            <person name="Takeshita N."/>
            <person name="Ussery D."/>
            <person name="vanKuyk P.A."/>
            <person name="Visser H."/>
            <person name="van de Vondervoort P.J."/>
            <person name="de Vries R.P."/>
            <person name="Walton J."/>
            <person name="Xiang X."/>
            <person name="Xiong Y."/>
            <person name="Zeng A.P."/>
            <person name="Brandt B.W."/>
            <person name="Cornell M.J."/>
            <person name="van den Hondel C.A."/>
            <person name="Visser J."/>
            <person name="Oliver S.G."/>
            <person name="Turner G."/>
        </authorList>
    </citation>
    <scope>GENOME REANNOTATION</scope>
    <source>
        <strain>FGSC A4 / ATCC 38163 / CBS 112.46 / NRRL 194 / M139</strain>
    </source>
</reference>
<reference key="5">
    <citation type="journal article" date="1995" name="Appl. Environ. Microbiol.">
        <title>StcS, a putative P-450 monooxygenase, is required for the conversion of versicolorin A to sterigmatocystin in Aspergillus nidulans.</title>
        <authorList>
            <person name="Keller N.P."/>
            <person name="Segner S."/>
            <person name="Bhatnagar D."/>
            <person name="Adams T.H."/>
        </authorList>
    </citation>
    <scope>FUNCTION</scope>
</reference>
<reference key="6">
    <citation type="journal article" date="1995" name="J. Bacteriol.">
        <title>Sterigmatocystin biosynthesis in Aspergillus nidulans requires a novel type I polyketide synthase.</title>
        <authorList>
            <person name="Yu J.-H."/>
            <person name="Leonard T.J."/>
        </authorList>
    </citation>
    <scope>FUNCTION</scope>
    <source>
        <strain>FGSC A4 / ATCC 38163 / CBS 112.46 / NRRL 194 / M139</strain>
    </source>
</reference>
<reference key="7">
    <citation type="journal article" date="1996" name="Appl. Environ. Microbiol.">
        <title>Aspergillus nidulans stcP encodes an O-methyltransferase that is required for sterigmatocystin biosynthesis.</title>
        <authorList>
            <person name="Kelkar H.S."/>
            <person name="Keller N.P."/>
            <person name="Adams T.H."/>
        </authorList>
    </citation>
    <scope>FUNCTION</scope>
</reference>
<reference key="8">
    <citation type="journal article" date="1996" name="Proc. Natl. Acad. Sci. U.S.A.">
        <title>Aspergillus has distinct fatty acid synthases for primary and secondary metabolism.</title>
        <authorList>
            <person name="Brown D.W."/>
            <person name="Adams T.H."/>
            <person name="Keller N.P."/>
        </authorList>
    </citation>
    <scope>FUNCTION</scope>
</reference>
<reference key="9">
    <citation type="journal article" date="1997" name="J. Biol. Chem.">
        <title>Aspergillus nidulans stcL encodes a putative cytochrome P-450 monooxygenase required for bisfuran desaturation during aflatoxin/sterigmatocystin biosynthesis.</title>
        <authorList>
            <person name="Kelkar H.S."/>
            <person name="Skloss T.W."/>
            <person name="Haw J.F."/>
            <person name="Keller N.P."/>
            <person name="Adams T.H."/>
        </authorList>
    </citation>
    <scope>FUNCTION</scope>
</reference>
<reference key="10">
    <citation type="journal article" date="1998" name="Mol. Microbiol.">
        <title>Sequence-specific binding by Aspergillus nidulans aflR, a C6 zinc cluster protein regulating mycotoxin biosynthesis.</title>
        <authorList>
            <person name="Fernandes M."/>
            <person name="Keller N.P."/>
            <person name="Adams T.H."/>
        </authorList>
    </citation>
    <scope>INDUCTION</scope>
</reference>
<reference key="11">
    <citation type="journal article" date="2000" name="Appl. Environ. Microbiol.">
        <title>Requirement of monooxygenase-mediated steps for sterigmatocystin biosynthesis by Aspergillus nidulans.</title>
        <authorList>
            <person name="Keller N.P."/>
            <person name="Watanabe C.M."/>
            <person name="Kelkar H.S."/>
            <person name="Adams T.H."/>
            <person name="Townsend C.A."/>
        </authorList>
    </citation>
    <scope>FUNCTION</scope>
</reference>
<reference key="12">
    <citation type="journal article" date="2012" name="Metabolites">
        <title>Genetics of polyketide metabolism in Aspergillus nidulans.</title>
        <authorList>
            <person name="Klejnstrup M.L."/>
            <person name="Frandsen R.J."/>
            <person name="Holm D.K."/>
            <person name="Nielsen M.T."/>
            <person name="Mortensen U.H."/>
            <person name="Larsen T.O."/>
            <person name="Nielsen J.B."/>
        </authorList>
    </citation>
    <scope>REVIEW ON STERIGMATOCYSTIN BIOSYNTHESIS</scope>
</reference>
<name>STCT_EMENI</name>
<dbReference type="EC" id="2.5.1.-" evidence="2"/>
<dbReference type="EMBL" id="U34740">
    <property type="protein sequence ID" value="AAC49204.1"/>
    <property type="molecule type" value="Genomic_DNA"/>
</dbReference>
<dbReference type="EMBL" id="L27825">
    <property type="protein sequence ID" value="AAA53573.1"/>
    <property type="molecule type" value="Genomic_DNA"/>
</dbReference>
<dbReference type="EMBL" id="AACD01000132">
    <property type="protein sequence ID" value="EAA61595.1"/>
    <property type="molecule type" value="Genomic_DNA"/>
</dbReference>
<dbReference type="EMBL" id="BN001304">
    <property type="protein sequence ID" value="CBF80147.1"/>
    <property type="molecule type" value="Genomic_DNA"/>
</dbReference>
<dbReference type="RefSeq" id="XP_681076.1">
    <property type="nucleotide sequence ID" value="XM_675984.1"/>
</dbReference>
<dbReference type="SMR" id="Q00717"/>
<dbReference type="STRING" id="227321.Q00717"/>
<dbReference type="EnsemblFungi" id="CBF80147">
    <property type="protein sequence ID" value="CBF80147"/>
    <property type="gene ID" value="ANIA_07807"/>
</dbReference>
<dbReference type="KEGG" id="ani:ANIA_07807"/>
<dbReference type="eggNOG" id="KOG0867">
    <property type="taxonomic scope" value="Eukaryota"/>
</dbReference>
<dbReference type="HOGENOM" id="CLU_011226_3_2_1"/>
<dbReference type="InParanoid" id="Q00717"/>
<dbReference type="OMA" id="MAIALYI"/>
<dbReference type="OrthoDB" id="249703at2759"/>
<dbReference type="UniPathway" id="UPA00377"/>
<dbReference type="Proteomes" id="UP000000560">
    <property type="component" value="Chromosome IV"/>
</dbReference>
<dbReference type="GO" id="GO:0005737">
    <property type="term" value="C:cytoplasm"/>
    <property type="evidence" value="ECO:0000318"/>
    <property type="project" value="GO_Central"/>
</dbReference>
<dbReference type="GO" id="GO:0005634">
    <property type="term" value="C:nucleus"/>
    <property type="evidence" value="ECO:0000318"/>
    <property type="project" value="GO_Central"/>
</dbReference>
<dbReference type="GO" id="GO:0016740">
    <property type="term" value="F:transferase activity"/>
    <property type="evidence" value="ECO:0007669"/>
    <property type="project" value="UniProtKB-KW"/>
</dbReference>
<dbReference type="GO" id="GO:0045461">
    <property type="term" value="P:sterigmatocystin biosynthetic process"/>
    <property type="evidence" value="ECO:0007669"/>
    <property type="project" value="UniProtKB-UniPathway"/>
</dbReference>
<dbReference type="CDD" id="cd03181">
    <property type="entry name" value="GST_C_EF1Bgamma_like"/>
    <property type="match status" value="1"/>
</dbReference>
<dbReference type="CDD" id="cd03044">
    <property type="entry name" value="GST_N_EF1Bgamma"/>
    <property type="match status" value="1"/>
</dbReference>
<dbReference type="FunFam" id="1.20.1050.10:FF:000006">
    <property type="entry name" value="Elongation factor 1 gamma"/>
    <property type="match status" value="1"/>
</dbReference>
<dbReference type="FunFam" id="3.40.30.10:FF:000142">
    <property type="entry name" value="Elongation factor 1 gamma"/>
    <property type="match status" value="1"/>
</dbReference>
<dbReference type="Gene3D" id="1.20.1050.10">
    <property type="match status" value="1"/>
</dbReference>
<dbReference type="Gene3D" id="3.40.30.10">
    <property type="entry name" value="Glutaredoxin"/>
    <property type="match status" value="1"/>
</dbReference>
<dbReference type="InterPro" id="IPR050802">
    <property type="entry name" value="EF-GSTs"/>
</dbReference>
<dbReference type="InterPro" id="IPR010987">
    <property type="entry name" value="Glutathione-S-Trfase_C-like"/>
</dbReference>
<dbReference type="InterPro" id="IPR036282">
    <property type="entry name" value="Glutathione-S-Trfase_C_sf"/>
</dbReference>
<dbReference type="InterPro" id="IPR040079">
    <property type="entry name" value="Glutathione_S-Trfase"/>
</dbReference>
<dbReference type="InterPro" id="IPR004045">
    <property type="entry name" value="Glutathione_S-Trfase_N"/>
</dbReference>
<dbReference type="InterPro" id="IPR004046">
    <property type="entry name" value="GST_C"/>
</dbReference>
<dbReference type="InterPro" id="IPR036249">
    <property type="entry name" value="Thioredoxin-like_sf"/>
</dbReference>
<dbReference type="PANTHER" id="PTHR43986">
    <property type="entry name" value="ELONGATION FACTOR 1-GAMMA"/>
    <property type="match status" value="1"/>
</dbReference>
<dbReference type="PANTHER" id="PTHR43986:SF1">
    <property type="entry name" value="ELONGATION FACTOR 1-GAMMA"/>
    <property type="match status" value="1"/>
</dbReference>
<dbReference type="Pfam" id="PF00043">
    <property type="entry name" value="GST_C"/>
    <property type="match status" value="1"/>
</dbReference>
<dbReference type="Pfam" id="PF02798">
    <property type="entry name" value="GST_N"/>
    <property type="match status" value="1"/>
</dbReference>
<dbReference type="SFLD" id="SFLDS00019">
    <property type="entry name" value="Glutathione_Transferase_(cytos"/>
    <property type="match status" value="1"/>
</dbReference>
<dbReference type="SFLD" id="SFLDG00358">
    <property type="entry name" value="Main_(cytGST)"/>
    <property type="match status" value="1"/>
</dbReference>
<dbReference type="SUPFAM" id="SSF47616">
    <property type="entry name" value="GST C-terminal domain-like"/>
    <property type="match status" value="1"/>
</dbReference>
<dbReference type="SUPFAM" id="SSF52833">
    <property type="entry name" value="Thioredoxin-like"/>
    <property type="match status" value="1"/>
</dbReference>
<dbReference type="PROSITE" id="PS50405">
    <property type="entry name" value="GST_CTER"/>
    <property type="match status" value="1"/>
</dbReference>
<dbReference type="PROSITE" id="PS50404">
    <property type="entry name" value="GST_NTER"/>
    <property type="match status" value="1"/>
</dbReference>
<keyword id="KW-1185">Reference proteome</keyword>
<keyword id="KW-0808">Transferase</keyword>
<feature type="chain" id="PRO_0000186044" description="Glutathione S-transferase stcT">
    <location>
        <begin position="1"/>
        <end position="215"/>
    </location>
</feature>
<feature type="domain" description="GST N-terminal" evidence="3">
    <location>
        <begin position="2"/>
        <end position="82"/>
    </location>
</feature>
<feature type="domain" description="GST C-terminal" evidence="4">
    <location>
        <begin position="83"/>
        <end position="211"/>
    </location>
</feature>
<feature type="binding site" evidence="2">
    <location>
        <position position="52"/>
    </location>
    <ligand>
        <name>glutathione</name>
        <dbReference type="ChEBI" id="CHEBI:57925"/>
    </ligand>
</feature>
<feature type="binding site" evidence="2">
    <location>
        <position position="52"/>
    </location>
    <ligand>
        <name>substrate</name>
    </ligand>
</feature>
<feature type="binding site" evidence="2">
    <location>
        <position position="66"/>
    </location>
    <ligand>
        <name>glutathione</name>
        <dbReference type="ChEBI" id="CHEBI:57925"/>
    </ligand>
</feature>
<feature type="sequence conflict" description="In Ref. 2; AAA53573." evidence="15" ref="2">
    <original>G</original>
    <variation>A</variation>
    <location>
        <position position="61"/>
    </location>
</feature>